<accession>Q9K8G0</accession>
<comment type="function">
    <text evidence="1">Tetrapolymerization of the monopyrrole PBG into the hydroxymethylbilane pre-uroporphyrinogen in several discrete steps.</text>
</comment>
<comment type="catalytic activity">
    <reaction>
        <text>4 porphobilinogen + H2O = hydroxymethylbilane + 4 NH4(+)</text>
        <dbReference type="Rhea" id="RHEA:13185"/>
        <dbReference type="ChEBI" id="CHEBI:15377"/>
        <dbReference type="ChEBI" id="CHEBI:28938"/>
        <dbReference type="ChEBI" id="CHEBI:57845"/>
        <dbReference type="ChEBI" id="CHEBI:58126"/>
        <dbReference type="EC" id="2.5.1.61"/>
    </reaction>
</comment>
<comment type="cofactor">
    <cofactor evidence="1">
        <name>dipyrromethane</name>
        <dbReference type="ChEBI" id="CHEBI:60342"/>
    </cofactor>
    <text evidence="1">Binds 1 dipyrromethane group covalently.</text>
</comment>
<comment type="pathway">
    <text>Porphyrin-containing compound metabolism; protoporphyrin-IX biosynthesis; coproporphyrinogen-III from 5-aminolevulinate: step 2/4.</text>
</comment>
<comment type="subunit">
    <text evidence="1">Monomer.</text>
</comment>
<comment type="miscellaneous">
    <text evidence="1">The porphobilinogen subunits are added to the dipyrromethane group.</text>
</comment>
<comment type="similarity">
    <text evidence="2">Belongs to the HMBS family.</text>
</comment>
<organism>
    <name type="scientific">Halalkalibacterium halodurans (strain ATCC BAA-125 / DSM 18197 / FERM 7344 / JCM 9153 / C-125)</name>
    <name type="common">Bacillus halodurans</name>
    <dbReference type="NCBI Taxonomy" id="272558"/>
    <lineage>
        <taxon>Bacteria</taxon>
        <taxon>Bacillati</taxon>
        <taxon>Bacillota</taxon>
        <taxon>Bacilli</taxon>
        <taxon>Bacillales</taxon>
        <taxon>Bacillaceae</taxon>
        <taxon>Halalkalibacterium (ex Joshi et al. 2022)</taxon>
    </lineage>
</organism>
<reference key="1">
    <citation type="journal article" date="2000" name="Nucleic Acids Res.">
        <title>Complete genome sequence of the alkaliphilic bacterium Bacillus halodurans and genomic sequence comparison with Bacillus subtilis.</title>
        <authorList>
            <person name="Takami H."/>
            <person name="Nakasone K."/>
            <person name="Takaki Y."/>
            <person name="Maeno G."/>
            <person name="Sasaki R."/>
            <person name="Masui N."/>
            <person name="Fuji F."/>
            <person name="Hirama C."/>
            <person name="Nakamura Y."/>
            <person name="Ogasawara N."/>
            <person name="Kuhara S."/>
            <person name="Horikoshi K."/>
        </authorList>
    </citation>
    <scope>NUCLEOTIDE SEQUENCE [LARGE SCALE GENOMIC DNA]</scope>
    <source>
        <strain>ATCC BAA-125 / DSM 18197 / FERM 7344 / JCM 9153 / C-125</strain>
    </source>
</reference>
<evidence type="ECO:0000250" key="1"/>
<evidence type="ECO:0000305" key="2"/>
<dbReference type="EC" id="2.5.1.61"/>
<dbReference type="EMBL" id="BA000004">
    <property type="protein sequence ID" value="BAB06765.1"/>
    <property type="molecule type" value="Genomic_DNA"/>
</dbReference>
<dbReference type="PIR" id="F84030">
    <property type="entry name" value="F84030"/>
</dbReference>
<dbReference type="RefSeq" id="WP_010899190.1">
    <property type="nucleotide sequence ID" value="NC_002570.2"/>
</dbReference>
<dbReference type="SMR" id="Q9K8G0"/>
<dbReference type="STRING" id="272558.gene:10728956"/>
<dbReference type="KEGG" id="bha:BH3046"/>
<dbReference type="eggNOG" id="COG0181">
    <property type="taxonomic scope" value="Bacteria"/>
</dbReference>
<dbReference type="HOGENOM" id="CLU_019704_0_2_9"/>
<dbReference type="OrthoDB" id="9810298at2"/>
<dbReference type="UniPathway" id="UPA00251">
    <property type="reaction ID" value="UER00319"/>
</dbReference>
<dbReference type="Proteomes" id="UP000001258">
    <property type="component" value="Chromosome"/>
</dbReference>
<dbReference type="GO" id="GO:0005737">
    <property type="term" value="C:cytoplasm"/>
    <property type="evidence" value="ECO:0007669"/>
    <property type="project" value="TreeGrafter"/>
</dbReference>
<dbReference type="GO" id="GO:0004418">
    <property type="term" value="F:hydroxymethylbilane synthase activity"/>
    <property type="evidence" value="ECO:0007669"/>
    <property type="project" value="UniProtKB-UniRule"/>
</dbReference>
<dbReference type="GO" id="GO:0006782">
    <property type="term" value="P:protoporphyrinogen IX biosynthetic process"/>
    <property type="evidence" value="ECO:0007669"/>
    <property type="project" value="UniProtKB-UniRule"/>
</dbReference>
<dbReference type="CDD" id="cd13646">
    <property type="entry name" value="PBP2_EcHMBS_like"/>
    <property type="match status" value="1"/>
</dbReference>
<dbReference type="FunFam" id="3.30.160.40:FF:000001">
    <property type="entry name" value="Porphobilinogen deaminase"/>
    <property type="match status" value="1"/>
</dbReference>
<dbReference type="FunFam" id="3.40.190.10:FF:000004">
    <property type="entry name" value="Porphobilinogen deaminase"/>
    <property type="match status" value="1"/>
</dbReference>
<dbReference type="FunFam" id="3.40.190.10:FF:000005">
    <property type="entry name" value="Porphobilinogen deaminase"/>
    <property type="match status" value="1"/>
</dbReference>
<dbReference type="Gene3D" id="3.40.190.10">
    <property type="entry name" value="Periplasmic binding protein-like II"/>
    <property type="match status" value="2"/>
</dbReference>
<dbReference type="Gene3D" id="3.30.160.40">
    <property type="entry name" value="Porphobilinogen deaminase, C-terminal domain"/>
    <property type="match status" value="1"/>
</dbReference>
<dbReference type="HAMAP" id="MF_00260">
    <property type="entry name" value="Porphobil_deam"/>
    <property type="match status" value="1"/>
</dbReference>
<dbReference type="InterPro" id="IPR000860">
    <property type="entry name" value="HemC"/>
</dbReference>
<dbReference type="InterPro" id="IPR022419">
    <property type="entry name" value="Porphobilin_deaminase_cofac_BS"/>
</dbReference>
<dbReference type="InterPro" id="IPR022417">
    <property type="entry name" value="Porphobilin_deaminase_N"/>
</dbReference>
<dbReference type="InterPro" id="IPR022418">
    <property type="entry name" value="Porphobilinogen_deaminase_C"/>
</dbReference>
<dbReference type="InterPro" id="IPR036803">
    <property type="entry name" value="Porphobilinogen_deaminase_C_sf"/>
</dbReference>
<dbReference type="NCBIfam" id="TIGR00212">
    <property type="entry name" value="hemC"/>
    <property type="match status" value="1"/>
</dbReference>
<dbReference type="PANTHER" id="PTHR11557">
    <property type="entry name" value="PORPHOBILINOGEN DEAMINASE"/>
    <property type="match status" value="1"/>
</dbReference>
<dbReference type="PANTHER" id="PTHR11557:SF0">
    <property type="entry name" value="PORPHOBILINOGEN DEAMINASE"/>
    <property type="match status" value="1"/>
</dbReference>
<dbReference type="Pfam" id="PF01379">
    <property type="entry name" value="Porphobil_deam"/>
    <property type="match status" value="1"/>
</dbReference>
<dbReference type="Pfam" id="PF03900">
    <property type="entry name" value="Porphobil_deamC"/>
    <property type="match status" value="1"/>
</dbReference>
<dbReference type="PIRSF" id="PIRSF001438">
    <property type="entry name" value="4pyrrol_synth_OHMeBilane_synth"/>
    <property type="match status" value="1"/>
</dbReference>
<dbReference type="PRINTS" id="PR00151">
    <property type="entry name" value="PORPHBDMNASE"/>
</dbReference>
<dbReference type="SUPFAM" id="SSF53850">
    <property type="entry name" value="Periplasmic binding protein-like II"/>
    <property type="match status" value="1"/>
</dbReference>
<dbReference type="SUPFAM" id="SSF54782">
    <property type="entry name" value="Porphobilinogen deaminase (hydroxymethylbilane synthase), C-terminal domain"/>
    <property type="match status" value="1"/>
</dbReference>
<dbReference type="PROSITE" id="PS00533">
    <property type="entry name" value="PORPHOBILINOGEN_DEAM"/>
    <property type="match status" value="1"/>
</dbReference>
<feature type="chain" id="PRO_0000142907" description="Porphobilinogen deaminase">
    <location>
        <begin position="1"/>
        <end position="311"/>
    </location>
</feature>
<feature type="modified residue" description="S-(dipyrrolylmethanemethyl)cysteine" evidence="1">
    <location>
        <position position="241"/>
    </location>
</feature>
<keyword id="KW-0627">Porphyrin biosynthesis</keyword>
<keyword id="KW-1185">Reference proteome</keyword>
<keyword id="KW-0808">Transferase</keyword>
<protein>
    <recommendedName>
        <fullName>Porphobilinogen deaminase</fullName>
        <shortName>PBG</shortName>
        <ecNumber>2.5.1.61</ecNumber>
    </recommendedName>
    <alternativeName>
        <fullName>Hydroxymethylbilane synthase</fullName>
        <shortName>HMBS</shortName>
    </alternativeName>
    <alternativeName>
        <fullName>Pre-uroporphyrinogen synthase</fullName>
    </alternativeName>
</protein>
<proteinExistence type="inferred from homology"/>
<name>HEM3_HALH5</name>
<gene>
    <name type="primary">hemC</name>
    <name type="ordered locus">BH3046</name>
</gene>
<sequence length="311" mass="34006">MRKIIIGSRRSQLALTQTEWVISKLKEAGAPFDFEIKKIITKGDQILDVTLSKVGGKGLFVKEIEQAMANKEIDIAVHSMKDVPSVLQEGFALGATTTRVDPRDALISNEGYTLAELPAGSIVGTSSLRRSAQILAKRPDLEVKWIRGNIETRLRKLKEEDFDAIILAAAGLERMGWSNEIVTEYLDPDLCVPAVGQGALGIECRADDDEVLEMLKTINDDTTAKTVLAERTFLHRMEGGCQVPIAGYATLTDEGEIELTALVGTPDGEQIFKEILRGKDPVQLGETMAQALMDQGAKEVLEQVKKGLESQ</sequence>